<gene>
    <name evidence="1" type="primary">tsf</name>
    <name type="ordered locus">Caul_2804</name>
</gene>
<comment type="function">
    <text evidence="1">Associates with the EF-Tu.GDP complex and induces the exchange of GDP to GTP. It remains bound to the aminoacyl-tRNA.EF-Tu.GTP complex up to the GTP hydrolysis stage on the ribosome.</text>
</comment>
<comment type="subcellular location">
    <subcellularLocation>
        <location evidence="1">Cytoplasm</location>
    </subcellularLocation>
</comment>
<comment type="similarity">
    <text evidence="1">Belongs to the EF-Ts family.</text>
</comment>
<proteinExistence type="inferred from homology"/>
<organism>
    <name type="scientific">Caulobacter sp. (strain K31)</name>
    <dbReference type="NCBI Taxonomy" id="366602"/>
    <lineage>
        <taxon>Bacteria</taxon>
        <taxon>Pseudomonadati</taxon>
        <taxon>Pseudomonadota</taxon>
        <taxon>Alphaproteobacteria</taxon>
        <taxon>Caulobacterales</taxon>
        <taxon>Caulobacteraceae</taxon>
        <taxon>Caulobacter</taxon>
    </lineage>
</organism>
<name>EFTS_CAUSK</name>
<protein>
    <recommendedName>
        <fullName evidence="1">Elongation factor Ts</fullName>
        <shortName evidence="1">EF-Ts</shortName>
    </recommendedName>
</protein>
<evidence type="ECO:0000255" key="1">
    <source>
        <dbReference type="HAMAP-Rule" id="MF_00050"/>
    </source>
</evidence>
<dbReference type="EMBL" id="CP000927">
    <property type="protein sequence ID" value="ABZ71931.1"/>
    <property type="molecule type" value="Genomic_DNA"/>
</dbReference>
<dbReference type="SMR" id="B0SZ20"/>
<dbReference type="STRING" id="366602.Caul_2804"/>
<dbReference type="KEGG" id="cak:Caul_2804"/>
<dbReference type="eggNOG" id="COG0264">
    <property type="taxonomic scope" value="Bacteria"/>
</dbReference>
<dbReference type="HOGENOM" id="CLU_047155_2_0_5"/>
<dbReference type="OrthoDB" id="9808348at2"/>
<dbReference type="GO" id="GO:0005737">
    <property type="term" value="C:cytoplasm"/>
    <property type="evidence" value="ECO:0007669"/>
    <property type="project" value="UniProtKB-SubCell"/>
</dbReference>
<dbReference type="GO" id="GO:0003746">
    <property type="term" value="F:translation elongation factor activity"/>
    <property type="evidence" value="ECO:0007669"/>
    <property type="project" value="UniProtKB-UniRule"/>
</dbReference>
<dbReference type="CDD" id="cd14275">
    <property type="entry name" value="UBA_EF-Ts"/>
    <property type="match status" value="1"/>
</dbReference>
<dbReference type="FunFam" id="1.10.286.20:FF:000001">
    <property type="entry name" value="Elongation factor Ts"/>
    <property type="match status" value="1"/>
</dbReference>
<dbReference type="FunFam" id="1.10.8.10:FF:000001">
    <property type="entry name" value="Elongation factor Ts"/>
    <property type="match status" value="1"/>
</dbReference>
<dbReference type="Gene3D" id="1.10.286.20">
    <property type="match status" value="1"/>
</dbReference>
<dbReference type="Gene3D" id="1.10.8.10">
    <property type="entry name" value="DNA helicase RuvA subunit, C-terminal domain"/>
    <property type="match status" value="1"/>
</dbReference>
<dbReference type="Gene3D" id="3.30.479.20">
    <property type="entry name" value="Elongation factor Ts, dimerisation domain"/>
    <property type="match status" value="2"/>
</dbReference>
<dbReference type="HAMAP" id="MF_00050">
    <property type="entry name" value="EF_Ts"/>
    <property type="match status" value="1"/>
</dbReference>
<dbReference type="InterPro" id="IPR036402">
    <property type="entry name" value="EF-Ts_dimer_sf"/>
</dbReference>
<dbReference type="InterPro" id="IPR001816">
    <property type="entry name" value="Transl_elong_EFTs/EF1B"/>
</dbReference>
<dbReference type="InterPro" id="IPR014039">
    <property type="entry name" value="Transl_elong_EFTs/EF1B_dimer"/>
</dbReference>
<dbReference type="InterPro" id="IPR018101">
    <property type="entry name" value="Transl_elong_Ts_CS"/>
</dbReference>
<dbReference type="InterPro" id="IPR009060">
    <property type="entry name" value="UBA-like_sf"/>
</dbReference>
<dbReference type="NCBIfam" id="TIGR00116">
    <property type="entry name" value="tsf"/>
    <property type="match status" value="1"/>
</dbReference>
<dbReference type="PANTHER" id="PTHR11741">
    <property type="entry name" value="ELONGATION FACTOR TS"/>
    <property type="match status" value="1"/>
</dbReference>
<dbReference type="PANTHER" id="PTHR11741:SF0">
    <property type="entry name" value="ELONGATION FACTOR TS, MITOCHONDRIAL"/>
    <property type="match status" value="1"/>
</dbReference>
<dbReference type="Pfam" id="PF00889">
    <property type="entry name" value="EF_TS"/>
    <property type="match status" value="1"/>
</dbReference>
<dbReference type="SUPFAM" id="SSF54713">
    <property type="entry name" value="Elongation factor Ts (EF-Ts), dimerisation domain"/>
    <property type="match status" value="2"/>
</dbReference>
<dbReference type="SUPFAM" id="SSF46934">
    <property type="entry name" value="UBA-like"/>
    <property type="match status" value="1"/>
</dbReference>
<dbReference type="PROSITE" id="PS01126">
    <property type="entry name" value="EF_TS_1"/>
    <property type="match status" value="1"/>
</dbReference>
<dbReference type="PROSITE" id="PS01127">
    <property type="entry name" value="EF_TS_2"/>
    <property type="match status" value="1"/>
</dbReference>
<reference key="1">
    <citation type="submission" date="2008-01" db="EMBL/GenBank/DDBJ databases">
        <title>Complete sequence of chromosome of Caulobacter sp. K31.</title>
        <authorList>
            <consortium name="US DOE Joint Genome Institute"/>
            <person name="Copeland A."/>
            <person name="Lucas S."/>
            <person name="Lapidus A."/>
            <person name="Barry K."/>
            <person name="Glavina del Rio T."/>
            <person name="Dalin E."/>
            <person name="Tice H."/>
            <person name="Pitluck S."/>
            <person name="Bruce D."/>
            <person name="Goodwin L."/>
            <person name="Thompson L.S."/>
            <person name="Brettin T."/>
            <person name="Detter J.C."/>
            <person name="Han C."/>
            <person name="Schmutz J."/>
            <person name="Larimer F."/>
            <person name="Land M."/>
            <person name="Hauser L."/>
            <person name="Kyrpides N."/>
            <person name="Kim E."/>
            <person name="Stephens C."/>
            <person name="Richardson P."/>
        </authorList>
    </citation>
    <scope>NUCLEOTIDE SEQUENCE [LARGE SCALE GENOMIC DNA]</scope>
    <source>
        <strain>K31</strain>
    </source>
</reference>
<sequence>MAEVTAALVKELREKSGVGMMDCKKALVENNGDIDASIDWLRAKGLSKAAKKADRVAAEGLVGIVVRAEGAGMIAAAVEVNAETDFLSRNELFQTAVRKIARAGLDNEGVEAISAAKTPDGEVVSDLLTHLIATIGENMVLRRSARFAVAHGAVASYIHNATAPDLGRIGVLVAIEGAGDQTKILELGRKIAMHVAATAPLSLSPDDLDQAAIEKERQIFTEQALESGKPPAVVEKMVEGRIRKFLEEVVLLKQAFVMNPDQTVEQLVAEAGKELGSPLTVKGFVRLALGEGVEKGPEGDFAAEVAAMTGQA</sequence>
<accession>B0SZ20</accession>
<feature type="chain" id="PRO_1000074856" description="Elongation factor Ts">
    <location>
        <begin position="1"/>
        <end position="312"/>
    </location>
</feature>
<feature type="region of interest" description="Involved in Mg(2+) ion dislocation from EF-Tu" evidence="1">
    <location>
        <begin position="84"/>
        <end position="87"/>
    </location>
</feature>
<keyword id="KW-0963">Cytoplasm</keyword>
<keyword id="KW-0251">Elongation factor</keyword>
<keyword id="KW-0648">Protein biosynthesis</keyword>